<keyword id="KW-0002">3D-structure</keyword>
<keyword id="KW-0025">Alternative splicing</keyword>
<keyword id="KW-0067">ATP-binding</keyword>
<keyword id="KW-0131">Cell cycle</keyword>
<keyword id="KW-0132">Cell division</keyword>
<keyword id="KW-0963">Cytoplasm</keyword>
<keyword id="KW-0206">Cytoskeleton</keyword>
<keyword id="KW-0418">Kinase</keyword>
<keyword id="KW-0460">Magnesium</keyword>
<keyword id="KW-0479">Metal-binding</keyword>
<keyword id="KW-0498">Mitosis</keyword>
<keyword id="KW-0547">Nucleotide-binding</keyword>
<keyword id="KW-0539">Nucleus</keyword>
<keyword id="KW-0597">Phosphoprotein</keyword>
<keyword id="KW-1267">Proteomics identification</keyword>
<keyword id="KW-1185">Reference proteome</keyword>
<keyword id="KW-0723">Serine/threonine-protein kinase</keyword>
<keyword id="KW-0808">Transferase</keyword>
<keyword id="KW-0829">Tyrosine-protein kinase</keyword>
<keyword id="KW-0832">Ubl conjugation</keyword>
<reference key="1">
    <citation type="journal article" date="1998" name="J. Biol. Chem.">
        <title>Sequence characteristics, subcellular localization, and substrate specificity of DYRK-related kinases, a novel family of dual specificity protein kinases.</title>
        <authorList>
            <person name="Becker W."/>
            <person name="Weber Y."/>
            <person name="Wetzel K."/>
            <person name="Eirmbter K."/>
            <person name="Tejedor F.J."/>
            <person name="Joost H.-G."/>
        </authorList>
    </citation>
    <scope>NUCLEOTIDE SEQUENCE [MRNA] (ISOFORM 1)</scope>
    <scope>CATALYTIC ACTIVITY</scope>
    <scope>AUTOPHOSPHORYLATION</scope>
    <source>
        <tissue>Fetal brain</tissue>
    </source>
</reference>
<reference key="2">
    <citation type="submission" date="2000-05" db="EMBL/GenBank/DDBJ databases">
        <authorList>
            <person name="Becker W."/>
        </authorList>
    </citation>
    <scope>SEQUENCE REVISION TO N-TERMINUS</scope>
</reference>
<reference key="3">
    <citation type="journal article" date="1998" name="Zhonghua Yi Xue Yi Chuan Xue Za Zhi">
        <title>Molecular cloning and characterization of novel protein kinase gene DYRK3.</title>
        <authorList>
            <person name="Xia J."/>
            <person name="Yang X."/>
            <person name="Ruan Q."/>
            <person name="Pan Q."/>
            <person name="Liu C."/>
            <person name="Xie W."/>
            <person name="Deng H."/>
        </authorList>
    </citation>
    <scope>NUCLEOTIDE SEQUENCE [MRNA] (ISOFORM 1)</scope>
</reference>
<reference key="4">
    <citation type="journal article" date="2000" name="Blood">
        <title>REDK, a novel human regulatory erythroid kinase.</title>
        <authorList>
            <person name="Lord K.A."/>
            <person name="Creasy C.L."/>
            <person name="King A.G."/>
            <person name="King C."/>
            <person name="Burns B.M."/>
            <person name="Lee J.C."/>
            <person name="Dillon S.B."/>
        </authorList>
    </citation>
    <scope>NUCLEOTIDE SEQUENCE [MRNA] (ISOFORMS 1 AND 2)</scope>
    <scope>FUNCTION</scope>
    <scope>COFACTOR</scope>
    <scope>SUBCELLULAR LOCATION</scope>
    <scope>TISSUE SPECIFICITY</scope>
    <scope>INDUCTION</scope>
    <source>
        <tissue>Skeletal muscle</tissue>
    </source>
</reference>
<reference key="5">
    <citation type="submission" date="2000-12" db="EMBL/GenBank/DDBJ databases">
        <title>Cloning of the human testis-specific dual-specificity tyrosine-(Y)-phosphorylation regulated kinase 5 (DYRK5) gene.</title>
        <authorList>
            <person name="Zhou Z.M."/>
        </authorList>
    </citation>
    <scope>NUCLEOTIDE SEQUENCE [MRNA] (ISOFORM 2)</scope>
    <source>
        <tissue>Testis</tissue>
    </source>
</reference>
<reference key="6">
    <citation type="submission" date="2004-04" db="EMBL/GenBank/DDBJ databases">
        <authorList>
            <person name="Raya A."/>
            <person name="de la Luna S."/>
        </authorList>
    </citation>
    <scope>NUCLEOTIDE SEQUENCE [MRNA] (ISOFORM 1)</scope>
</reference>
<reference key="7">
    <citation type="journal article" date="2006" name="Nature">
        <title>The DNA sequence and biological annotation of human chromosome 1.</title>
        <authorList>
            <person name="Gregory S.G."/>
            <person name="Barlow K.F."/>
            <person name="McLay K.E."/>
            <person name="Kaul R."/>
            <person name="Swarbreck D."/>
            <person name="Dunham A."/>
            <person name="Scott C.E."/>
            <person name="Howe K.L."/>
            <person name="Woodfine K."/>
            <person name="Spencer C.C.A."/>
            <person name="Jones M.C."/>
            <person name="Gillson C."/>
            <person name="Searle S."/>
            <person name="Zhou Y."/>
            <person name="Kokocinski F."/>
            <person name="McDonald L."/>
            <person name="Evans R."/>
            <person name="Phillips K."/>
            <person name="Atkinson A."/>
            <person name="Cooper R."/>
            <person name="Jones C."/>
            <person name="Hall R.E."/>
            <person name="Andrews T.D."/>
            <person name="Lloyd C."/>
            <person name="Ainscough R."/>
            <person name="Almeida J.P."/>
            <person name="Ambrose K.D."/>
            <person name="Anderson F."/>
            <person name="Andrew R.W."/>
            <person name="Ashwell R.I.S."/>
            <person name="Aubin K."/>
            <person name="Babbage A.K."/>
            <person name="Bagguley C.L."/>
            <person name="Bailey J."/>
            <person name="Beasley H."/>
            <person name="Bethel G."/>
            <person name="Bird C.P."/>
            <person name="Bray-Allen S."/>
            <person name="Brown J.Y."/>
            <person name="Brown A.J."/>
            <person name="Buckley D."/>
            <person name="Burton J."/>
            <person name="Bye J."/>
            <person name="Carder C."/>
            <person name="Chapman J.C."/>
            <person name="Clark S.Y."/>
            <person name="Clarke G."/>
            <person name="Clee C."/>
            <person name="Cobley V."/>
            <person name="Collier R.E."/>
            <person name="Corby N."/>
            <person name="Coville G.J."/>
            <person name="Davies J."/>
            <person name="Deadman R."/>
            <person name="Dunn M."/>
            <person name="Earthrowl M."/>
            <person name="Ellington A.G."/>
            <person name="Errington H."/>
            <person name="Frankish A."/>
            <person name="Frankland J."/>
            <person name="French L."/>
            <person name="Garner P."/>
            <person name="Garnett J."/>
            <person name="Gay L."/>
            <person name="Ghori M.R.J."/>
            <person name="Gibson R."/>
            <person name="Gilby L.M."/>
            <person name="Gillett W."/>
            <person name="Glithero R.J."/>
            <person name="Grafham D.V."/>
            <person name="Griffiths C."/>
            <person name="Griffiths-Jones S."/>
            <person name="Grocock R."/>
            <person name="Hammond S."/>
            <person name="Harrison E.S.I."/>
            <person name="Hart E."/>
            <person name="Haugen E."/>
            <person name="Heath P.D."/>
            <person name="Holmes S."/>
            <person name="Holt K."/>
            <person name="Howden P.J."/>
            <person name="Hunt A.R."/>
            <person name="Hunt S.E."/>
            <person name="Hunter G."/>
            <person name="Isherwood J."/>
            <person name="James R."/>
            <person name="Johnson C."/>
            <person name="Johnson D."/>
            <person name="Joy A."/>
            <person name="Kay M."/>
            <person name="Kershaw J.K."/>
            <person name="Kibukawa M."/>
            <person name="Kimberley A.M."/>
            <person name="King A."/>
            <person name="Knights A.J."/>
            <person name="Lad H."/>
            <person name="Laird G."/>
            <person name="Lawlor S."/>
            <person name="Leongamornlert D.A."/>
            <person name="Lloyd D.M."/>
            <person name="Loveland J."/>
            <person name="Lovell J."/>
            <person name="Lush M.J."/>
            <person name="Lyne R."/>
            <person name="Martin S."/>
            <person name="Mashreghi-Mohammadi M."/>
            <person name="Matthews L."/>
            <person name="Matthews N.S.W."/>
            <person name="McLaren S."/>
            <person name="Milne S."/>
            <person name="Mistry S."/>
            <person name="Moore M.J.F."/>
            <person name="Nickerson T."/>
            <person name="O'Dell C.N."/>
            <person name="Oliver K."/>
            <person name="Palmeiri A."/>
            <person name="Palmer S.A."/>
            <person name="Parker A."/>
            <person name="Patel D."/>
            <person name="Pearce A.V."/>
            <person name="Peck A.I."/>
            <person name="Pelan S."/>
            <person name="Phelps K."/>
            <person name="Phillimore B.J."/>
            <person name="Plumb R."/>
            <person name="Rajan J."/>
            <person name="Raymond C."/>
            <person name="Rouse G."/>
            <person name="Saenphimmachak C."/>
            <person name="Sehra H.K."/>
            <person name="Sheridan E."/>
            <person name="Shownkeen R."/>
            <person name="Sims S."/>
            <person name="Skuce C.D."/>
            <person name="Smith M."/>
            <person name="Steward C."/>
            <person name="Subramanian S."/>
            <person name="Sycamore N."/>
            <person name="Tracey A."/>
            <person name="Tromans A."/>
            <person name="Van Helmond Z."/>
            <person name="Wall M."/>
            <person name="Wallis J.M."/>
            <person name="White S."/>
            <person name="Whitehead S.L."/>
            <person name="Wilkinson J.E."/>
            <person name="Willey D.L."/>
            <person name="Williams H."/>
            <person name="Wilming L."/>
            <person name="Wray P.W."/>
            <person name="Wu Z."/>
            <person name="Coulson A."/>
            <person name="Vaudin M."/>
            <person name="Sulston J.E."/>
            <person name="Durbin R.M."/>
            <person name="Hubbard T."/>
            <person name="Wooster R."/>
            <person name="Dunham I."/>
            <person name="Carter N.P."/>
            <person name="McVean G."/>
            <person name="Ross M.T."/>
            <person name="Harrow J."/>
            <person name="Olson M.V."/>
            <person name="Beck S."/>
            <person name="Rogers J."/>
            <person name="Bentley D.R."/>
        </authorList>
    </citation>
    <scope>NUCLEOTIDE SEQUENCE [LARGE SCALE GENOMIC DNA]</scope>
</reference>
<reference key="8">
    <citation type="submission" date="2005-09" db="EMBL/GenBank/DDBJ databases">
        <authorList>
            <person name="Mural R.J."/>
            <person name="Istrail S."/>
            <person name="Sutton G.G."/>
            <person name="Florea L."/>
            <person name="Halpern A.L."/>
            <person name="Mobarry C.M."/>
            <person name="Lippert R."/>
            <person name="Walenz B."/>
            <person name="Shatkay H."/>
            <person name="Dew I."/>
            <person name="Miller J.R."/>
            <person name="Flanigan M.J."/>
            <person name="Edwards N.J."/>
            <person name="Bolanos R."/>
            <person name="Fasulo D."/>
            <person name="Halldorsson B.V."/>
            <person name="Hannenhalli S."/>
            <person name="Turner R."/>
            <person name="Yooseph S."/>
            <person name="Lu F."/>
            <person name="Nusskern D.R."/>
            <person name="Shue B.C."/>
            <person name="Zheng X.H."/>
            <person name="Zhong F."/>
            <person name="Delcher A.L."/>
            <person name="Huson D.H."/>
            <person name="Kravitz S.A."/>
            <person name="Mouchard L."/>
            <person name="Reinert K."/>
            <person name="Remington K.A."/>
            <person name="Clark A.G."/>
            <person name="Waterman M.S."/>
            <person name="Eichler E.E."/>
            <person name="Adams M.D."/>
            <person name="Hunkapiller M.W."/>
            <person name="Myers E.W."/>
            <person name="Venter J.C."/>
        </authorList>
    </citation>
    <scope>NUCLEOTIDE SEQUENCE [LARGE SCALE GENOMIC DNA]</scope>
</reference>
<reference key="9">
    <citation type="journal article" date="2004" name="Genome Res.">
        <title>The status, quality, and expansion of the NIH full-length cDNA project: the Mammalian Gene Collection (MGC).</title>
        <authorList>
            <consortium name="The MGC Project Team"/>
        </authorList>
    </citation>
    <scope>NUCLEOTIDE SEQUENCE [LARGE SCALE MRNA] (ISOFORM 2)</scope>
    <source>
        <tissue>Uterus</tissue>
    </source>
</reference>
<reference key="10">
    <citation type="journal article" date="2010" name="J. Biol. Chem.">
        <title>DYRK1A and DYRK3 promote cell survival through phosphorylation and activation of SIRT1.</title>
        <authorList>
            <person name="Guo X."/>
            <person name="Williams J.G."/>
            <person name="Schug T.T."/>
            <person name="Li X."/>
        </authorList>
    </citation>
    <scope>SUBCELLULAR LOCATION</scope>
    <scope>FUNCTION</scope>
</reference>
<reference key="11">
    <citation type="journal article" date="2013" name="Cell">
        <title>Dual specificity kinase DYRK3 couples stress granule condensation/dissolution to mTORC1 signaling.</title>
        <authorList>
            <person name="Wippich F."/>
            <person name="Bodenmiller B."/>
            <person name="Trajkovska M.G."/>
            <person name="Wanka S."/>
            <person name="Aebersold R."/>
            <person name="Pelkmans L."/>
        </authorList>
    </citation>
    <scope>SUBCELLULAR LOCATION</scope>
    <scope>FUNCTION</scope>
    <scope>CATALYTIC ACTIVITY</scope>
    <scope>MUTAGENESIS OF LYS-238</scope>
</reference>
<reference key="12">
    <citation type="journal article" date="2018" name="Nature">
        <title>Kinase-controlled phase transition of membraneless organelles in mitosis.</title>
        <authorList>
            <person name="Rai A.K."/>
            <person name="Chen J.X."/>
            <person name="Selbach M."/>
            <person name="Pelkmans L."/>
        </authorList>
    </citation>
    <scope>FUNCTION</scope>
    <scope>CATALYTIC ACTIVITY</scope>
    <scope>SUBCELLULAR LOCATION</scope>
    <scope>UBIQUITINATION</scope>
    <scope>MUTAGENESIS OF LYS-238 AND 470-ARG--LYS-474</scope>
</reference>
<reference evidence="20" key="13">
    <citation type="journal article" date="2018" name="J. Mol. Biol.">
        <title>Crystal structure of human dual-specificity tyrosine-regulated kinase 3 reveals new structural features and insights into its auto-phosphorylation.</title>
        <authorList>
            <person name="Kim K."/>
            <person name="Cha J.S."/>
            <person name="Cho Y.S."/>
            <person name="Kim H."/>
            <person name="Chang N."/>
            <person name="Kim H.J."/>
            <person name="Cho H.S."/>
        </authorList>
    </citation>
    <scope>X-RAY CRYSTALLOGRAPHY (1.90 ANGSTROMS) IN COMPLEX WITH HARMINE</scope>
    <scope>FUNCTION</scope>
    <scope>CATALYTIC ACTIVITY</scope>
    <scope>ACTIVITY REGULATION</scope>
    <scope>PHOSPHORYLATION AT SER-350</scope>
    <scope>MUTAGENESIS OF LYS-238 AND SER-350</scope>
</reference>
<reference key="14">
    <citation type="journal article" date="2007" name="Nature">
        <title>Patterns of somatic mutation in human cancer genomes.</title>
        <authorList>
            <person name="Greenman C."/>
            <person name="Stephens P."/>
            <person name="Smith R."/>
            <person name="Dalgliesh G.L."/>
            <person name="Hunter C."/>
            <person name="Bignell G."/>
            <person name="Davies H."/>
            <person name="Teague J."/>
            <person name="Butler A."/>
            <person name="Stevens C."/>
            <person name="Edkins S."/>
            <person name="O'Meara S."/>
            <person name="Vastrik I."/>
            <person name="Schmidt E.E."/>
            <person name="Avis T."/>
            <person name="Barthorpe S."/>
            <person name="Bhamra G."/>
            <person name="Buck G."/>
            <person name="Choudhury B."/>
            <person name="Clements J."/>
            <person name="Cole J."/>
            <person name="Dicks E."/>
            <person name="Forbes S."/>
            <person name="Gray K."/>
            <person name="Halliday K."/>
            <person name="Harrison R."/>
            <person name="Hills K."/>
            <person name="Hinton J."/>
            <person name="Jenkinson A."/>
            <person name="Jones D."/>
            <person name="Menzies A."/>
            <person name="Mironenko T."/>
            <person name="Perry J."/>
            <person name="Raine K."/>
            <person name="Richardson D."/>
            <person name="Shepherd R."/>
            <person name="Small A."/>
            <person name="Tofts C."/>
            <person name="Varian J."/>
            <person name="Webb T."/>
            <person name="West S."/>
            <person name="Widaa S."/>
            <person name="Yates A."/>
            <person name="Cahill D.P."/>
            <person name="Louis D.N."/>
            <person name="Goldstraw P."/>
            <person name="Nicholson A.G."/>
            <person name="Brasseur F."/>
            <person name="Looijenga L."/>
            <person name="Weber B.L."/>
            <person name="Chiew Y.-E."/>
            <person name="DeFazio A."/>
            <person name="Greaves M.F."/>
            <person name="Green A.R."/>
            <person name="Campbell P."/>
            <person name="Birney E."/>
            <person name="Easton D.F."/>
            <person name="Chenevix-Trench G."/>
            <person name="Tan M.-H."/>
            <person name="Khoo S.K."/>
            <person name="Teh B.T."/>
            <person name="Yuen S.T."/>
            <person name="Leung S.Y."/>
            <person name="Wooster R."/>
            <person name="Futreal P.A."/>
            <person name="Stratton M.R."/>
        </authorList>
    </citation>
    <scope>VARIANT [LARGE SCALE ANALYSIS] LEU-239</scope>
</reference>
<name>DYRK3_HUMAN</name>
<accession>O43781</accession>
<accession>D3DT79</accession>
<accession>Q7Z752</accession>
<accession>Q9HBY6</accession>
<accession>Q9HBY7</accession>
<comment type="function">
    <text evidence="5 7 8 9 10 11">Dual-specificity protein kinase that promotes disassembly of several types of membraneless organelles during mitosis, such as stress granules, nuclear speckles and pericentriolar material (PubMed:29973724). Dual-specificity tyrosine-regulated kinases (DYRKs) autophosphorylate a critical tyrosine residue in their activation loop and phosphorylate their substrate on serine and threonine residues (PubMed:29634919, PubMed:9748265). Acts as a central dissolvase of membraneless organelles during the G2-to-M transition, after the nuclear-envelope breakdown: acts by mediating phosphorylation of multiple serine and threonine residues in unstructured domains of proteins, such as SRRM1 and PCM1 (PubMed:29973724). Does not mediate disassembly of all membraneless organelles: disassembly of P-body and nucleolus is not regulated by DYRK3 (PubMed:29973724). Dissolution of membraneless organelles at the onset of mitosis is also required to release mitotic regulators, such as ZNF207, from liquid-unmixed organelles where they are sequestered and keep them dissolved during mitosis (PubMed:29973724). Regulates mTORC1 by mediating the dissolution of stress granules: during stressful conditions, DYRK3 partitions from the cytosol to the stress granule, together with mTORC1 components, which prevents mTORC1 signaling (PubMed:23415227). When stress signals are gone, the kinase activity of DYRK3 is required for the dissolution of stress granule and mTORC1 relocation to the cytosol: acts by mediating the phosphorylation of the mTORC1 inhibitor AKT1S1, allowing full reactivation of mTORC1 signaling (PubMed:23415227). Also acts as a negative regulator of EPO-dependent erythropoiesis: may place an upper limit on red cell production during stress erythropoiesis (PubMed:10779429). Inhibits cell death due to cytokine withdrawal in hematopoietic progenitor cells (PubMed:10779429). Promotes cell survival upon genotoxic stress through phosphorylation of SIRT1: this in turn inhibits p53/TP53 activity and apoptosis (PubMed:20167603).</text>
</comment>
<comment type="catalytic activity">
    <reaction evidence="8 9 10 11">
        <text>L-seryl-[protein] + ATP = O-phospho-L-seryl-[protein] + ADP + H(+)</text>
        <dbReference type="Rhea" id="RHEA:17989"/>
        <dbReference type="Rhea" id="RHEA-COMP:9863"/>
        <dbReference type="Rhea" id="RHEA-COMP:11604"/>
        <dbReference type="ChEBI" id="CHEBI:15378"/>
        <dbReference type="ChEBI" id="CHEBI:29999"/>
        <dbReference type="ChEBI" id="CHEBI:30616"/>
        <dbReference type="ChEBI" id="CHEBI:83421"/>
        <dbReference type="ChEBI" id="CHEBI:456216"/>
        <dbReference type="EC" id="2.7.12.1"/>
    </reaction>
</comment>
<comment type="catalytic activity">
    <reaction evidence="8 9 10 11">
        <text>L-threonyl-[protein] + ATP = O-phospho-L-threonyl-[protein] + ADP + H(+)</text>
        <dbReference type="Rhea" id="RHEA:46608"/>
        <dbReference type="Rhea" id="RHEA-COMP:11060"/>
        <dbReference type="Rhea" id="RHEA-COMP:11605"/>
        <dbReference type="ChEBI" id="CHEBI:15378"/>
        <dbReference type="ChEBI" id="CHEBI:30013"/>
        <dbReference type="ChEBI" id="CHEBI:30616"/>
        <dbReference type="ChEBI" id="CHEBI:61977"/>
        <dbReference type="ChEBI" id="CHEBI:456216"/>
        <dbReference type="EC" id="2.7.12.1"/>
    </reaction>
</comment>
<comment type="catalytic activity">
    <reaction evidence="8 9 10 11">
        <text>L-tyrosyl-[protein] + ATP = O-phospho-L-tyrosyl-[protein] + ADP + H(+)</text>
        <dbReference type="Rhea" id="RHEA:10596"/>
        <dbReference type="Rhea" id="RHEA-COMP:10136"/>
        <dbReference type="Rhea" id="RHEA-COMP:20101"/>
        <dbReference type="ChEBI" id="CHEBI:15378"/>
        <dbReference type="ChEBI" id="CHEBI:30616"/>
        <dbReference type="ChEBI" id="CHEBI:46858"/>
        <dbReference type="ChEBI" id="CHEBI:61978"/>
        <dbReference type="ChEBI" id="CHEBI:456216"/>
        <dbReference type="EC" id="2.7.12.1"/>
    </reaction>
</comment>
<comment type="cofactor">
    <cofactor evidence="5">
        <name>Mg(2+)</name>
        <dbReference type="ChEBI" id="CHEBI:18420"/>
    </cofactor>
</comment>
<comment type="activity regulation">
    <text evidence="9 10 11">Protein kinase activity is activated following autophosphorylation at Tyr-369 (PubMed:9748265). Inhibited by harmine, an ATP competitive inhibitor (PubMed:29634919). Inhibited by small-compound GSK-626616 (PubMed:29973724).</text>
</comment>
<comment type="subunit">
    <text evidence="1">Interacts with SIRT1.</text>
</comment>
<comment type="interaction">
    <interactant intactId="EBI-13332019">
        <id>O43781-2</id>
    </interactant>
    <interactant intactId="EBI-739467">
        <id>Q9H8Y8</id>
        <label>GORASP2</label>
    </interactant>
    <organismsDiffer>false</organismsDiffer>
    <experiments>5</experiments>
</comment>
<comment type="subcellular location">
    <subcellularLocation>
        <location evidence="5 7 10">Nucleus</location>
    </subcellularLocation>
    <subcellularLocation>
        <location evidence="10">Cytoplasm</location>
    </subcellularLocation>
    <subcellularLocation>
        <location evidence="10">Nucleus speckle</location>
    </subcellularLocation>
    <subcellularLocation>
        <location evidence="7 8 10">Cytoplasmic granule</location>
    </subcellularLocation>
    <subcellularLocation>
        <location evidence="10">Cytoplasm</location>
        <location evidence="10">Cytoskeleton</location>
        <location evidence="10">Microtubule organizing center</location>
        <location evidence="10">Centrosome</location>
    </subcellularLocation>
    <text evidence="7 10">Associates with membraneless organelles in the cytoplasm and nucleus (PubMed:29973724). Shuttles between cytoplasm and stress granules (PubMed:20167603). Localized predominantly on distinct speckles distributed throughout the cytoplasm of the cell (PubMed:20167603). At low concentration, showns a homogeneous distribution throughout the cytoplasm and does not condense in speckles. During oxidative and osmotic stress, localizes to stress granules (PubMed:20167603).</text>
</comment>
<comment type="alternative products">
    <event type="alternative splicing"/>
    <isoform>
        <id>O43781-1</id>
        <name>1</name>
        <name evidence="12">Long</name>
        <sequence type="displayed"/>
    </isoform>
    <isoform>
        <id>O43781-2</id>
        <name>2</name>
        <name evidence="12">Short</name>
        <sequence type="described" ref="VSP_026178 VSP_026179"/>
    </isoform>
</comment>
<comment type="tissue specificity">
    <text evidence="5">Isoform 1: Highly expressed in testis and in hematopoietic tissue such as fetal liver, and bone marrow (PubMed:10779429). Isoform 1: Predominant form in fetal liver and bone marrow (PubMed:10779429). Isoform 1: Present at low levels in heart, pancreas, lymph node and thymus (PubMed:10779429). Isoform 2: Highly expressed in testis and in hematopoietic tissue such as fetal liver, and bone marrow (PubMed:10779429). Isoform 2: Predominant form in testis. Isoform 2: Present at low levels in heart, pancreas, lymph node and thymus (PubMed:10779429).</text>
</comment>
<comment type="induction">
    <text evidence="5">By EPO/erythropoietin.</text>
</comment>
<comment type="domain">
    <text evidence="8">The N-terminal domain, which is intrinsically disordered, is required for stress granule localization.</text>
</comment>
<comment type="PTM">
    <text evidence="10">Ubiquitinated at anaphase by the anaphase-promoting complex (APC/C), leading to its degradation by the proteasome.</text>
</comment>
<comment type="PTM">
    <text evidence="11 18">Protein kinase activity is activated following autophosphorylation at Tyr-369 (Probable). Autophosphorylation at Ser-350 stabilizes the protein and enhances the protein kinase activity (PubMed:9748265).</text>
</comment>
<comment type="similarity">
    <text evidence="15">Belongs to the protein kinase superfamily. CMGC Ser/Thr protein kinase family. MNB/DYRK subfamily.</text>
</comment>
<proteinExistence type="evidence at protein level"/>
<organism>
    <name type="scientific">Homo sapiens</name>
    <name type="common">Human</name>
    <dbReference type="NCBI Taxonomy" id="9606"/>
    <lineage>
        <taxon>Eukaryota</taxon>
        <taxon>Metazoa</taxon>
        <taxon>Chordata</taxon>
        <taxon>Craniata</taxon>
        <taxon>Vertebrata</taxon>
        <taxon>Euteleostomi</taxon>
        <taxon>Mammalia</taxon>
        <taxon>Eutheria</taxon>
        <taxon>Euarchontoglires</taxon>
        <taxon>Primates</taxon>
        <taxon>Haplorrhini</taxon>
        <taxon>Catarrhini</taxon>
        <taxon>Hominidae</taxon>
        <taxon>Homo</taxon>
    </lineage>
</organism>
<protein>
    <recommendedName>
        <fullName>Dual specificity tyrosine-phosphorylation-regulated kinase 3</fullName>
        <ecNumber evidence="8 9 10 11">2.7.12.1</ecNumber>
    </recommendedName>
    <alternativeName>
        <fullName evidence="12">Regulatory erythroid kinase</fullName>
        <shortName evidence="12">REDK</shortName>
    </alternativeName>
</protein>
<evidence type="ECO:0000250" key="1">
    <source>
        <dbReference type="UniProtKB" id="Q922Y0"/>
    </source>
</evidence>
<evidence type="ECO:0000255" key="2">
    <source>
        <dbReference type="PROSITE-ProRule" id="PRU00159"/>
    </source>
</evidence>
<evidence type="ECO:0000255" key="3">
    <source>
        <dbReference type="PROSITE-ProRule" id="PRU10027"/>
    </source>
</evidence>
<evidence type="ECO:0000256" key="4">
    <source>
        <dbReference type="SAM" id="MobiDB-lite"/>
    </source>
</evidence>
<evidence type="ECO:0000269" key="5">
    <source>
    </source>
</evidence>
<evidence type="ECO:0000269" key="6">
    <source>
    </source>
</evidence>
<evidence type="ECO:0000269" key="7">
    <source>
    </source>
</evidence>
<evidence type="ECO:0000269" key="8">
    <source>
    </source>
</evidence>
<evidence type="ECO:0000269" key="9">
    <source>
    </source>
</evidence>
<evidence type="ECO:0000269" key="10">
    <source>
    </source>
</evidence>
<evidence type="ECO:0000269" key="11">
    <source>
    </source>
</evidence>
<evidence type="ECO:0000303" key="12">
    <source>
    </source>
</evidence>
<evidence type="ECO:0000303" key="13">
    <source>
    </source>
</evidence>
<evidence type="ECO:0000303" key="14">
    <source ref="5"/>
</evidence>
<evidence type="ECO:0000305" key="15"/>
<evidence type="ECO:0000305" key="16">
    <source>
    </source>
</evidence>
<evidence type="ECO:0000305" key="17">
    <source>
    </source>
</evidence>
<evidence type="ECO:0000305" key="18">
    <source>
    </source>
</evidence>
<evidence type="ECO:0000312" key="19">
    <source>
        <dbReference type="HGNC" id="HGNC:3094"/>
    </source>
</evidence>
<evidence type="ECO:0007744" key="20">
    <source>
        <dbReference type="PDB" id="5Y86"/>
    </source>
</evidence>
<evidence type="ECO:0007829" key="21">
    <source>
        <dbReference type="PDB" id="5Y86"/>
    </source>
</evidence>
<gene>
    <name evidence="19" type="primary">DYRK3</name>
</gene>
<dbReference type="EC" id="2.7.12.1" evidence="8 9 10 11"/>
<dbReference type="EMBL" id="Y12735">
    <property type="protein sequence ID" value="CAA73266.2"/>
    <property type="molecule type" value="mRNA"/>
</dbReference>
<dbReference type="EMBL" id="AF186773">
    <property type="protein sequence ID" value="AAG17028.1"/>
    <property type="molecule type" value="mRNA"/>
</dbReference>
<dbReference type="EMBL" id="AF186774">
    <property type="protein sequence ID" value="AAG17029.1"/>
    <property type="molecule type" value="mRNA"/>
</dbReference>
<dbReference type="EMBL" id="AF327561">
    <property type="protein sequence ID" value="AAK16443.1"/>
    <property type="molecule type" value="mRNA"/>
</dbReference>
<dbReference type="EMBL" id="AY590695">
    <property type="protein sequence ID" value="AAT06103.1"/>
    <property type="molecule type" value="mRNA"/>
</dbReference>
<dbReference type="EMBL" id="AL591846">
    <property type="status" value="NOT_ANNOTATED_CDS"/>
    <property type="molecule type" value="Genomic_DNA"/>
</dbReference>
<dbReference type="EMBL" id="CH471100">
    <property type="protein sequence ID" value="EAW93533.1"/>
    <property type="molecule type" value="Genomic_DNA"/>
</dbReference>
<dbReference type="EMBL" id="CH471100">
    <property type="protein sequence ID" value="EAW93534.1"/>
    <property type="molecule type" value="Genomic_DNA"/>
</dbReference>
<dbReference type="EMBL" id="BC015501">
    <property type="protein sequence ID" value="AAH15501.1"/>
    <property type="molecule type" value="mRNA"/>
</dbReference>
<dbReference type="CCDS" id="CCDS30999.1">
    <molecule id="O43781-1"/>
</dbReference>
<dbReference type="CCDS" id="CCDS31000.1">
    <molecule id="O43781-2"/>
</dbReference>
<dbReference type="RefSeq" id="NP_001004023.1">
    <molecule id="O43781-2"/>
    <property type="nucleotide sequence ID" value="NM_001004023.3"/>
</dbReference>
<dbReference type="RefSeq" id="NP_003573.2">
    <molecule id="O43781-1"/>
    <property type="nucleotide sequence ID" value="NM_003582.4"/>
</dbReference>
<dbReference type="RefSeq" id="XP_005273372.1">
    <molecule id="O43781-2"/>
    <property type="nucleotide sequence ID" value="XM_005273315.5"/>
</dbReference>
<dbReference type="RefSeq" id="XP_047288070.1">
    <molecule id="O43781-2"/>
    <property type="nucleotide sequence ID" value="XM_047432114.1"/>
</dbReference>
<dbReference type="RefSeq" id="XP_047288071.1">
    <molecule id="O43781-2"/>
    <property type="nucleotide sequence ID" value="XM_047432115.1"/>
</dbReference>
<dbReference type="RefSeq" id="XP_054195170.1">
    <molecule id="O43781-2"/>
    <property type="nucleotide sequence ID" value="XM_054339195.1"/>
</dbReference>
<dbReference type="PDB" id="5Y86">
    <property type="method" value="X-ray"/>
    <property type="resolution" value="1.90 A"/>
    <property type="chains" value="A=1-588"/>
</dbReference>
<dbReference type="PDBsum" id="5Y86"/>
<dbReference type="SMR" id="O43781"/>
<dbReference type="BioGRID" id="114022">
    <property type="interactions" value="41"/>
</dbReference>
<dbReference type="FunCoup" id="O43781">
    <property type="interactions" value="1205"/>
</dbReference>
<dbReference type="IntAct" id="O43781">
    <property type="interactions" value="28"/>
</dbReference>
<dbReference type="MINT" id="O43781"/>
<dbReference type="STRING" id="9606.ENSP00000356076"/>
<dbReference type="BindingDB" id="O43781"/>
<dbReference type="ChEMBL" id="CHEMBL4575"/>
<dbReference type="DrugBank" id="DB07919">
    <property type="generic name" value="Harmine"/>
</dbReference>
<dbReference type="GuidetoPHARMACOLOGY" id="2012"/>
<dbReference type="iPTMnet" id="O43781"/>
<dbReference type="PhosphoSitePlus" id="O43781"/>
<dbReference type="BioMuta" id="DYRK3"/>
<dbReference type="CPTAC" id="non-CPTAC-5689"/>
<dbReference type="CPTAC" id="non-CPTAC-5690"/>
<dbReference type="jPOST" id="O43781"/>
<dbReference type="MassIVE" id="O43781"/>
<dbReference type="PaxDb" id="9606-ENSP00000356076"/>
<dbReference type="PeptideAtlas" id="O43781"/>
<dbReference type="ProteomicsDB" id="49168">
    <molecule id="O43781-1"/>
</dbReference>
<dbReference type="ProteomicsDB" id="49169">
    <molecule id="O43781-2"/>
</dbReference>
<dbReference type="Antibodypedia" id="34587">
    <property type="antibodies" value="230 antibodies from 29 providers"/>
</dbReference>
<dbReference type="DNASU" id="8444"/>
<dbReference type="Ensembl" id="ENST00000367106.1">
    <molecule id="O43781-2"/>
    <property type="protein sequence ID" value="ENSP00000356073.1"/>
    <property type="gene ID" value="ENSG00000143479.18"/>
</dbReference>
<dbReference type="Ensembl" id="ENST00000367108.7">
    <molecule id="O43781-2"/>
    <property type="protein sequence ID" value="ENSP00000356075.3"/>
    <property type="gene ID" value="ENSG00000143479.18"/>
</dbReference>
<dbReference type="Ensembl" id="ENST00000367109.8">
    <molecule id="O43781-1"/>
    <property type="protein sequence ID" value="ENSP00000356076.2"/>
    <property type="gene ID" value="ENSG00000143479.18"/>
</dbReference>
<dbReference type="GeneID" id="8444"/>
<dbReference type="KEGG" id="hsa:8444"/>
<dbReference type="MANE-Select" id="ENST00000367109.8">
    <property type="protein sequence ID" value="ENSP00000356076.2"/>
    <property type="RefSeq nucleotide sequence ID" value="NM_003582.4"/>
    <property type="RefSeq protein sequence ID" value="NP_003573.2"/>
</dbReference>
<dbReference type="UCSC" id="uc001hei.4">
    <molecule id="O43781-1"/>
    <property type="organism name" value="human"/>
</dbReference>
<dbReference type="AGR" id="HGNC:3094"/>
<dbReference type="CTD" id="8444"/>
<dbReference type="DisGeNET" id="8444"/>
<dbReference type="GeneCards" id="DYRK3"/>
<dbReference type="HGNC" id="HGNC:3094">
    <property type="gene designation" value="DYRK3"/>
</dbReference>
<dbReference type="HPA" id="ENSG00000143479">
    <property type="expression patterns" value="Tissue enhanced (testis)"/>
</dbReference>
<dbReference type="MIM" id="603497">
    <property type="type" value="gene"/>
</dbReference>
<dbReference type="neXtProt" id="NX_O43781"/>
<dbReference type="OpenTargets" id="ENSG00000143479"/>
<dbReference type="PharmGKB" id="PA27551"/>
<dbReference type="VEuPathDB" id="HostDB:ENSG00000143479"/>
<dbReference type="eggNOG" id="KOG0667">
    <property type="taxonomic scope" value="Eukaryota"/>
</dbReference>
<dbReference type="GeneTree" id="ENSGT00940000159878"/>
<dbReference type="HOGENOM" id="CLU_000288_5_13_1"/>
<dbReference type="InParanoid" id="O43781"/>
<dbReference type="OMA" id="HPWISKC"/>
<dbReference type="OrthoDB" id="9332038at2759"/>
<dbReference type="PAN-GO" id="O43781">
    <property type="GO annotations" value="8 GO annotations based on evolutionary models"/>
</dbReference>
<dbReference type="PhylomeDB" id="O43781"/>
<dbReference type="TreeFam" id="TF314624"/>
<dbReference type="BRENDA" id="2.7.12.1">
    <property type="organism ID" value="2681"/>
</dbReference>
<dbReference type="PathwayCommons" id="O43781"/>
<dbReference type="SignaLink" id="O43781"/>
<dbReference type="SIGNOR" id="O43781"/>
<dbReference type="BioGRID-ORCS" id="8444">
    <property type="hits" value="11 hits in 1191 CRISPR screens"/>
</dbReference>
<dbReference type="CD-CODE" id="1EF72FBA">
    <property type="entry name" value="ERES"/>
</dbReference>
<dbReference type="CD-CODE" id="804901D1">
    <property type="entry name" value="Nuclear speckle"/>
</dbReference>
<dbReference type="CD-CODE" id="8908B6CB">
    <property type="entry name" value="DYRK3 speckle"/>
</dbReference>
<dbReference type="CD-CODE" id="8C2F96ED">
    <property type="entry name" value="Centrosome"/>
</dbReference>
<dbReference type="CD-CODE" id="DEE660B4">
    <property type="entry name" value="Stress granule"/>
</dbReference>
<dbReference type="ChiTaRS" id="DYRK3">
    <property type="organism name" value="human"/>
</dbReference>
<dbReference type="GeneWiki" id="DYRK3"/>
<dbReference type="GenomeRNAi" id="8444"/>
<dbReference type="Pharos" id="O43781">
    <property type="development level" value="Tchem"/>
</dbReference>
<dbReference type="PRO" id="PR:O43781"/>
<dbReference type="Proteomes" id="UP000005640">
    <property type="component" value="Chromosome 1"/>
</dbReference>
<dbReference type="RNAct" id="O43781">
    <property type="molecule type" value="protein"/>
</dbReference>
<dbReference type="Bgee" id="ENSG00000143479">
    <property type="expression patterns" value="Expressed in type B pancreatic cell and 152 other cell types or tissues"/>
</dbReference>
<dbReference type="ExpressionAtlas" id="O43781">
    <property type="expression patterns" value="baseline and differential"/>
</dbReference>
<dbReference type="GO" id="GO:0005737">
    <property type="term" value="C:cytoplasm"/>
    <property type="evidence" value="ECO:0000314"/>
    <property type="project" value="UniProtKB"/>
</dbReference>
<dbReference type="GO" id="GO:0010494">
    <property type="term" value="C:cytoplasmic stress granule"/>
    <property type="evidence" value="ECO:0000314"/>
    <property type="project" value="UniProtKB"/>
</dbReference>
<dbReference type="GO" id="GO:0005856">
    <property type="term" value="C:cytoskeleton"/>
    <property type="evidence" value="ECO:0000318"/>
    <property type="project" value="GO_Central"/>
</dbReference>
<dbReference type="GO" id="GO:0005829">
    <property type="term" value="C:cytosol"/>
    <property type="evidence" value="ECO:0000314"/>
    <property type="project" value="HPA"/>
</dbReference>
<dbReference type="GO" id="GO:0043231">
    <property type="term" value="C:intracellular membrane-bounded organelle"/>
    <property type="evidence" value="ECO:0000314"/>
    <property type="project" value="HPA"/>
</dbReference>
<dbReference type="GO" id="GO:0016607">
    <property type="term" value="C:nuclear speck"/>
    <property type="evidence" value="ECO:0000314"/>
    <property type="project" value="UniProtKB"/>
</dbReference>
<dbReference type="GO" id="GO:0005654">
    <property type="term" value="C:nucleoplasm"/>
    <property type="evidence" value="ECO:0000314"/>
    <property type="project" value="HPA"/>
</dbReference>
<dbReference type="GO" id="GO:0005634">
    <property type="term" value="C:nucleus"/>
    <property type="evidence" value="ECO:0000314"/>
    <property type="project" value="UniProtKB"/>
</dbReference>
<dbReference type="GO" id="GO:0000242">
    <property type="term" value="C:pericentriolar material"/>
    <property type="evidence" value="ECO:0000314"/>
    <property type="project" value="UniProtKB"/>
</dbReference>
<dbReference type="GO" id="GO:0005524">
    <property type="term" value="F:ATP binding"/>
    <property type="evidence" value="ECO:0000314"/>
    <property type="project" value="UniProtKB"/>
</dbReference>
<dbReference type="GO" id="GO:0000287">
    <property type="term" value="F:magnesium ion binding"/>
    <property type="evidence" value="ECO:0000314"/>
    <property type="project" value="UniProtKB"/>
</dbReference>
<dbReference type="GO" id="GO:0004672">
    <property type="term" value="F:protein kinase activity"/>
    <property type="evidence" value="ECO:0000314"/>
    <property type="project" value="UniProtKB"/>
</dbReference>
<dbReference type="GO" id="GO:0106310">
    <property type="term" value="F:protein serine kinase activity"/>
    <property type="evidence" value="ECO:0007669"/>
    <property type="project" value="RHEA"/>
</dbReference>
<dbReference type="GO" id="GO:0004674">
    <property type="term" value="F:protein serine/threonine kinase activity"/>
    <property type="evidence" value="ECO:0000314"/>
    <property type="project" value="UniProtKB"/>
</dbReference>
<dbReference type="GO" id="GO:0004712">
    <property type="term" value="F:protein serine/threonine/tyrosine kinase activity"/>
    <property type="evidence" value="ECO:0007669"/>
    <property type="project" value="UniProtKB-EC"/>
</dbReference>
<dbReference type="GO" id="GO:0004713">
    <property type="term" value="F:protein tyrosine kinase activity"/>
    <property type="evidence" value="ECO:0007669"/>
    <property type="project" value="UniProtKB-KW"/>
</dbReference>
<dbReference type="GO" id="GO:0051301">
    <property type="term" value="P:cell division"/>
    <property type="evidence" value="ECO:0007669"/>
    <property type="project" value="UniProtKB-KW"/>
</dbReference>
<dbReference type="GO" id="GO:0030218">
    <property type="term" value="P:erythrocyte differentiation"/>
    <property type="evidence" value="ECO:0000314"/>
    <property type="project" value="UniProtKB"/>
</dbReference>
<dbReference type="GO" id="GO:0043066">
    <property type="term" value="P:negative regulation of apoptotic process"/>
    <property type="evidence" value="ECO:0007669"/>
    <property type="project" value="Ensembl"/>
</dbReference>
<dbReference type="GO" id="GO:0043518">
    <property type="term" value="P:negative regulation of DNA damage response, signal transduction by p53 class mediator"/>
    <property type="evidence" value="ECO:0007669"/>
    <property type="project" value="Ensembl"/>
</dbReference>
<dbReference type="GO" id="GO:0035063">
    <property type="term" value="P:nuclear speck organization"/>
    <property type="evidence" value="ECO:0000314"/>
    <property type="project" value="UniProtKB"/>
</dbReference>
<dbReference type="GO" id="GO:1903008">
    <property type="term" value="P:organelle disassembly"/>
    <property type="evidence" value="ECO:0000314"/>
    <property type="project" value="UniProtKB"/>
</dbReference>
<dbReference type="GO" id="GO:1902751">
    <property type="term" value="P:positive regulation of cell cycle G2/M phase transition"/>
    <property type="evidence" value="ECO:0000314"/>
    <property type="project" value="UniProtKB"/>
</dbReference>
<dbReference type="GO" id="GO:0006468">
    <property type="term" value="P:protein phosphorylation"/>
    <property type="evidence" value="ECO:0000314"/>
    <property type="project" value="UniProtKB"/>
</dbReference>
<dbReference type="GO" id="GO:0080135">
    <property type="term" value="P:regulation of cellular response to stress"/>
    <property type="evidence" value="ECO:0000315"/>
    <property type="project" value="UniProtKB"/>
</dbReference>
<dbReference type="GO" id="GO:1903432">
    <property type="term" value="P:regulation of TORC1 signaling"/>
    <property type="evidence" value="ECO:0000315"/>
    <property type="project" value="UniProtKB"/>
</dbReference>
<dbReference type="GO" id="GO:0035617">
    <property type="term" value="P:stress granule disassembly"/>
    <property type="evidence" value="ECO:0000314"/>
    <property type="project" value="UniProtKB"/>
</dbReference>
<dbReference type="CDD" id="cd14224">
    <property type="entry name" value="PKc_DYRK2_3"/>
    <property type="match status" value="1"/>
</dbReference>
<dbReference type="FunFam" id="1.10.510.10:FF:000112">
    <property type="entry name" value="Putative dual specificity tyrosine-phosphorylation-regulated kinase 2"/>
    <property type="match status" value="1"/>
</dbReference>
<dbReference type="FunFam" id="3.30.200.20:FF:000127">
    <property type="entry name" value="Putative dual specificity tyrosine-phosphorylation-regulated kinase 2"/>
    <property type="match status" value="1"/>
</dbReference>
<dbReference type="Gene3D" id="3.30.10.30">
    <property type="entry name" value="DYRK"/>
    <property type="match status" value="1"/>
</dbReference>
<dbReference type="Gene3D" id="3.30.200.20">
    <property type="entry name" value="Phosphorylase Kinase, domain 1"/>
    <property type="match status" value="1"/>
</dbReference>
<dbReference type="Gene3D" id="1.10.510.10">
    <property type="entry name" value="Transferase(Phosphotransferase) domain 1"/>
    <property type="match status" value="1"/>
</dbReference>
<dbReference type="InterPro" id="IPR042521">
    <property type="entry name" value="DYRK"/>
</dbReference>
<dbReference type="InterPro" id="IPR011009">
    <property type="entry name" value="Kinase-like_dom_sf"/>
</dbReference>
<dbReference type="InterPro" id="IPR000719">
    <property type="entry name" value="Prot_kinase_dom"/>
</dbReference>
<dbReference type="InterPro" id="IPR017441">
    <property type="entry name" value="Protein_kinase_ATP_BS"/>
</dbReference>
<dbReference type="InterPro" id="IPR008271">
    <property type="entry name" value="Ser/Thr_kinase_AS"/>
</dbReference>
<dbReference type="InterPro" id="IPR050494">
    <property type="entry name" value="Ser_Thr_dual-spec_kinase"/>
</dbReference>
<dbReference type="PANTHER" id="PTHR24058">
    <property type="entry name" value="DUAL SPECIFICITY PROTEIN KINASE"/>
    <property type="match status" value="1"/>
</dbReference>
<dbReference type="PANTHER" id="PTHR24058:SF35">
    <property type="entry name" value="DUAL SPECIFICITY TYROSINE-PHOSPHORYLATION-REGULATED KINASE 3"/>
    <property type="match status" value="1"/>
</dbReference>
<dbReference type="Pfam" id="PF00069">
    <property type="entry name" value="Pkinase"/>
    <property type="match status" value="1"/>
</dbReference>
<dbReference type="SMART" id="SM00220">
    <property type="entry name" value="S_TKc"/>
    <property type="match status" value="1"/>
</dbReference>
<dbReference type="SUPFAM" id="SSF56112">
    <property type="entry name" value="Protein kinase-like (PK-like)"/>
    <property type="match status" value="1"/>
</dbReference>
<dbReference type="PROSITE" id="PS00107">
    <property type="entry name" value="PROTEIN_KINASE_ATP"/>
    <property type="match status" value="1"/>
</dbReference>
<dbReference type="PROSITE" id="PS50011">
    <property type="entry name" value="PROTEIN_KINASE_DOM"/>
    <property type="match status" value="1"/>
</dbReference>
<dbReference type="PROSITE" id="PS00108">
    <property type="entry name" value="PROTEIN_KINASE_ST"/>
    <property type="match status" value="1"/>
</dbReference>
<sequence length="588" mass="65714">MGGTARGPGRKDAGPPGAGLPPQQRRLGDGVYDTFMMIDETKCPPCSNVLCNPSEPPPPRRLNMTTEQFTGDHTQHFLDGGEMKVEQLFQEFGNRKSNTIQSDGISDSEKCSPTVSQGKSSDCLNTVKSNSSSKAPKVVPLTPEQALKQYKHHLTAYEKLEIINYPEIYFVGPNAKKRHGVIGGPNNGGYDDADGAYIHVPRDHLAYRYEVLKIIGKGSFGQVARVYDHKLRQYVALKMVRNEKRFHRQAAEEIRILEHLKKQDKTGSMNVIHMLESFTFRNHVCMAFELLSIDLYELIKKNKFQGFSVQLVRKFAQSILQSLDALHKNKIIHCDLKPENILLKHHGRSSTKVIDFGSSCFEYQKLYTYIQSRFYRAPEIILGSRYSTPIDIWSFGCILAELLTGQPLFPGEDEGDQLACMMELLGMPPPKLLEQSKRAKYFINSKGIPRYCSVTTQADGRVVLVGGRSRRGKKRGPPGSKDWGTALKGCDDYLFIEFLKRCLHWDPSARLTPAQALRHPWISKSVPRPLTTIDKVSGKRVVNPASAFQGLGSKLPPVVGIANKLKANLMSETNGSIPLCSVLPKLIS</sequence>
<feature type="chain" id="PRO_0000085938" description="Dual specificity tyrosine-phosphorylation-regulated kinase 3">
    <location>
        <begin position="1"/>
        <end position="588"/>
    </location>
</feature>
<feature type="domain" description="Protein kinase" evidence="2">
    <location>
        <begin position="209"/>
        <end position="522"/>
    </location>
</feature>
<feature type="region of interest" description="Disordered" evidence="16">
    <location>
        <begin position="1"/>
        <end position="188"/>
    </location>
</feature>
<feature type="short sequence motif" description="Nuclear localization signal" evidence="10">
    <location>
        <begin position="468"/>
        <end position="481"/>
    </location>
</feature>
<feature type="compositionally biased region" description="Polar residues" evidence="4">
    <location>
        <begin position="97"/>
        <end position="134"/>
    </location>
</feature>
<feature type="active site" description="Proton acceptor" evidence="2 3">
    <location>
        <position position="335"/>
    </location>
</feature>
<feature type="binding site" evidence="2 17">
    <location>
        <begin position="215"/>
        <end position="223"/>
    </location>
    <ligand>
        <name>ATP</name>
        <dbReference type="ChEBI" id="CHEBI:30616"/>
    </ligand>
</feature>
<feature type="binding site" evidence="2 8 9">
    <location>
        <position position="238"/>
    </location>
    <ligand>
        <name>ATP</name>
        <dbReference type="ChEBI" id="CHEBI:30616"/>
    </ligand>
</feature>
<feature type="binding site" evidence="2 17">
    <location>
        <begin position="288"/>
        <end position="291"/>
    </location>
    <ligand>
        <name>ATP</name>
        <dbReference type="ChEBI" id="CHEBI:30616"/>
    </ligand>
</feature>
<feature type="modified residue" description="Phosphoserine" evidence="9">
    <location>
        <position position="350"/>
    </location>
</feature>
<feature type="modified residue" description="Phosphotyrosine" evidence="1">
    <location>
        <position position="369"/>
    </location>
</feature>
<feature type="splice variant" id="VSP_026178" description="In isoform 2." evidence="12 13 14">
    <location>
        <begin position="1"/>
        <end position="20"/>
    </location>
</feature>
<feature type="splice variant" id="VSP_026179" description="In isoform 2." evidence="12 13 14">
    <original>PPQQRR</original>
    <variation>MKWKEK</variation>
    <location>
        <begin position="21"/>
        <end position="26"/>
    </location>
</feature>
<feature type="sequence variant" id="VAR_040464" evidence="6">
    <original>M</original>
    <variation>L</variation>
    <location>
        <position position="239"/>
    </location>
</feature>
<feature type="mutagenesis site" description="Kinase dead; Induces formation of stress granules-like in absence of stress. Impaired dissolution of membraneless organelles during mitosis, such as stress granules, nuclear speckles and pericentriolar material." evidence="8 9 10">
    <original>K</original>
    <variation>M</variation>
    <location>
        <position position="238"/>
    </location>
</feature>
<feature type="mutagenesis site" description="Decreased stability of the protein." evidence="9">
    <original>S</original>
    <variation>A</variation>
    <location>
        <position position="350"/>
    </location>
</feature>
<feature type="mutagenesis site" description="Phosphomimetic mutant; increased stability of the protein." evidence="9">
    <original>S</original>
    <variation>E</variation>
    <variation>D</variation>
    <location>
        <position position="350"/>
    </location>
</feature>
<feature type="mutagenesis site" description="Abolishes localization to the nucleus, leading to impaired dissolution of nuclear speckles during mitosis." evidence="10">
    <original>RRGKK</original>
    <variation>AAGAA</variation>
    <location>
        <begin position="470"/>
        <end position="474"/>
    </location>
</feature>
<feature type="sequence conflict" description="In Ref. 9; AAH15501." evidence="15" ref="9">
    <original>R</original>
    <variation>H</variation>
    <location>
        <position position="313"/>
    </location>
</feature>
<feature type="sequence conflict" description="In Ref. 1; CAA73266." evidence="15" ref="1">
    <original>G</original>
    <variation>R</variation>
    <location>
        <position position="396"/>
    </location>
</feature>
<feature type="helix" evidence="21">
    <location>
        <begin position="143"/>
        <end position="149"/>
    </location>
</feature>
<feature type="turn" evidence="21">
    <location>
        <begin position="150"/>
        <end position="153"/>
    </location>
</feature>
<feature type="helix" evidence="21">
    <location>
        <begin position="156"/>
        <end position="161"/>
    </location>
</feature>
<feature type="helix" evidence="21">
    <location>
        <begin position="162"/>
        <end position="164"/>
    </location>
</feature>
<feature type="helix" evidence="21">
    <location>
        <begin position="185"/>
        <end position="188"/>
    </location>
</feature>
<feature type="turn" evidence="21">
    <location>
        <begin position="206"/>
        <end position="208"/>
    </location>
</feature>
<feature type="strand" evidence="21">
    <location>
        <begin position="209"/>
        <end position="218"/>
    </location>
</feature>
<feature type="strand" evidence="21">
    <location>
        <begin position="221"/>
        <end position="228"/>
    </location>
</feature>
<feature type="turn" evidence="21">
    <location>
        <begin position="229"/>
        <end position="232"/>
    </location>
</feature>
<feature type="strand" evidence="21">
    <location>
        <begin position="233"/>
        <end position="240"/>
    </location>
</feature>
<feature type="helix" evidence="21">
    <location>
        <begin position="244"/>
        <end position="263"/>
    </location>
</feature>
<feature type="turn" evidence="21">
    <location>
        <begin position="266"/>
        <end position="269"/>
    </location>
</feature>
<feature type="strand" evidence="21">
    <location>
        <begin position="274"/>
        <end position="280"/>
    </location>
</feature>
<feature type="strand" evidence="21">
    <location>
        <begin position="283"/>
        <end position="288"/>
    </location>
</feature>
<feature type="helix" evidence="21">
    <location>
        <begin position="295"/>
        <end position="301"/>
    </location>
</feature>
<feature type="turn" evidence="21">
    <location>
        <begin position="302"/>
        <end position="304"/>
    </location>
</feature>
<feature type="helix" evidence="21">
    <location>
        <begin position="309"/>
        <end position="328"/>
    </location>
</feature>
<feature type="helix" evidence="21">
    <location>
        <begin position="338"/>
        <end position="340"/>
    </location>
</feature>
<feature type="strand" evidence="21">
    <location>
        <begin position="341"/>
        <end position="345"/>
    </location>
</feature>
<feature type="strand" evidence="21">
    <location>
        <begin position="351"/>
        <end position="353"/>
    </location>
</feature>
<feature type="helix" evidence="21">
    <location>
        <begin position="356"/>
        <end position="358"/>
    </location>
</feature>
<feature type="helix" evidence="21">
    <location>
        <begin position="373"/>
        <end position="375"/>
    </location>
</feature>
<feature type="helix" evidence="21">
    <location>
        <begin position="378"/>
        <end position="382"/>
    </location>
</feature>
<feature type="helix" evidence="21">
    <location>
        <begin position="389"/>
        <end position="404"/>
    </location>
</feature>
<feature type="helix" evidence="21">
    <location>
        <begin position="414"/>
        <end position="425"/>
    </location>
</feature>
<feature type="helix" evidence="21">
    <location>
        <begin position="430"/>
        <end position="434"/>
    </location>
</feature>
<feature type="helix" evidence="21">
    <location>
        <begin position="439"/>
        <end position="441"/>
    </location>
</feature>
<feature type="strand" evidence="21">
    <location>
        <begin position="452"/>
        <end position="456"/>
    </location>
</feature>
<feature type="strand" evidence="21">
    <location>
        <begin position="462"/>
        <end position="465"/>
    </location>
</feature>
<feature type="helix" evidence="21">
    <location>
        <begin position="483"/>
        <end position="486"/>
    </location>
</feature>
<feature type="turn" evidence="21">
    <location>
        <begin position="487"/>
        <end position="489"/>
    </location>
</feature>
<feature type="helix" evidence="21">
    <location>
        <begin position="493"/>
        <end position="502"/>
    </location>
</feature>
<feature type="helix" evidence="21">
    <location>
        <begin position="507"/>
        <end position="509"/>
    </location>
</feature>
<feature type="helix" evidence="21">
    <location>
        <begin position="513"/>
        <end position="518"/>
    </location>
</feature>
<feature type="turn" evidence="21">
    <location>
        <begin position="520"/>
        <end position="522"/>
    </location>
</feature>